<accession>Q7CNK9</accession>
<proteinExistence type="inferred from homology"/>
<organism>
    <name type="scientific">Streptococcus pyogenes serotype M18 (strain MGAS8232)</name>
    <dbReference type="NCBI Taxonomy" id="186103"/>
    <lineage>
        <taxon>Bacteria</taxon>
        <taxon>Bacillati</taxon>
        <taxon>Bacillota</taxon>
        <taxon>Bacilli</taxon>
        <taxon>Lactobacillales</taxon>
        <taxon>Streptococcaceae</taxon>
        <taxon>Streptococcus</taxon>
    </lineage>
</organism>
<evidence type="ECO:0000255" key="1">
    <source>
        <dbReference type="HAMAP-Rule" id="MF_01539"/>
    </source>
</evidence>
<feature type="chain" id="PRO_0000147194" description="tRNA(Met) cytidine acetate ligase">
    <location>
        <begin position="1"/>
        <end position="368"/>
    </location>
</feature>
<feature type="binding site" evidence="1">
    <location>
        <begin position="7"/>
        <end position="20"/>
    </location>
    <ligand>
        <name>ATP</name>
        <dbReference type="ChEBI" id="CHEBI:30616"/>
    </ligand>
</feature>
<feature type="binding site" evidence="1">
    <location>
        <position position="96"/>
    </location>
    <ligand>
        <name>ATP</name>
        <dbReference type="ChEBI" id="CHEBI:30616"/>
    </ligand>
</feature>
<feature type="binding site" evidence="1">
    <location>
        <position position="152"/>
    </location>
    <ligand>
        <name>ATP</name>
        <dbReference type="ChEBI" id="CHEBI:30616"/>
    </ligand>
</feature>
<feature type="binding site" evidence="1">
    <location>
        <position position="175"/>
    </location>
    <ligand>
        <name>ATP</name>
        <dbReference type="ChEBI" id="CHEBI:30616"/>
    </ligand>
</feature>
<dbReference type="EC" id="6.3.4.-" evidence="1"/>
<dbReference type="EMBL" id="AE009949">
    <property type="protein sequence ID" value="AAL97069.1"/>
    <property type="molecule type" value="Genomic_DNA"/>
</dbReference>
<dbReference type="RefSeq" id="WP_002991082.1">
    <property type="nucleotide sequence ID" value="NC_003485.1"/>
</dbReference>
<dbReference type="SMR" id="Q7CNK9"/>
<dbReference type="KEGG" id="spm:spyM18_0309"/>
<dbReference type="HOGENOM" id="CLU_038915_0_2_9"/>
<dbReference type="GO" id="GO:0005737">
    <property type="term" value="C:cytoplasm"/>
    <property type="evidence" value="ECO:0007669"/>
    <property type="project" value="UniProtKB-SubCell"/>
</dbReference>
<dbReference type="GO" id="GO:0005524">
    <property type="term" value="F:ATP binding"/>
    <property type="evidence" value="ECO:0007669"/>
    <property type="project" value="UniProtKB-KW"/>
</dbReference>
<dbReference type="GO" id="GO:0016879">
    <property type="term" value="F:ligase activity, forming carbon-nitrogen bonds"/>
    <property type="evidence" value="ECO:0007669"/>
    <property type="project" value="UniProtKB-UniRule"/>
</dbReference>
<dbReference type="GO" id="GO:0000049">
    <property type="term" value="F:tRNA binding"/>
    <property type="evidence" value="ECO:0007669"/>
    <property type="project" value="UniProtKB-KW"/>
</dbReference>
<dbReference type="GO" id="GO:0006400">
    <property type="term" value="P:tRNA modification"/>
    <property type="evidence" value="ECO:0007669"/>
    <property type="project" value="UniProtKB-UniRule"/>
</dbReference>
<dbReference type="Gene3D" id="3.40.50.620">
    <property type="entry name" value="HUPs"/>
    <property type="match status" value="1"/>
</dbReference>
<dbReference type="HAMAP" id="MF_01539">
    <property type="entry name" value="TmcAL"/>
    <property type="match status" value="1"/>
</dbReference>
<dbReference type="InterPro" id="IPR014729">
    <property type="entry name" value="Rossmann-like_a/b/a_fold"/>
</dbReference>
<dbReference type="InterPro" id="IPR008513">
    <property type="entry name" value="tRNA(Met)_cyd_acetate_ligase"/>
</dbReference>
<dbReference type="NCBIfam" id="NF010191">
    <property type="entry name" value="PRK13670.1"/>
    <property type="match status" value="1"/>
</dbReference>
<dbReference type="PANTHER" id="PTHR37825">
    <property type="entry name" value="TRNA(MET) CYTIDINE ACETATE LIGASE"/>
    <property type="match status" value="1"/>
</dbReference>
<dbReference type="PANTHER" id="PTHR37825:SF1">
    <property type="entry name" value="TRNA(MET) CYTIDINE ACETATE LIGASE"/>
    <property type="match status" value="1"/>
</dbReference>
<dbReference type="Pfam" id="PF05636">
    <property type="entry name" value="HIGH_NTase1"/>
    <property type="match status" value="1"/>
</dbReference>
<dbReference type="SUPFAM" id="SSF52374">
    <property type="entry name" value="Nucleotidylyl transferase"/>
    <property type="match status" value="1"/>
</dbReference>
<comment type="function">
    <text evidence="1">Catalyzes the formation of N(4)-acetylcytidine (ac(4)C) at the wobble position of elongator tRNA(Met), using acetate and ATP as substrates. First activates an acetate ion to form acetyladenylate (Ac-AMP) and then transfers the acetyl group to tRNA to form ac(4)C34.</text>
</comment>
<comment type="catalytic activity">
    <reaction evidence="1">
        <text>cytidine(34) in elongator tRNA(Met) + acetate + ATP = N(4)-acetylcytidine(34) in elongator tRNA(Met) + AMP + diphosphate</text>
        <dbReference type="Rhea" id="RHEA:58144"/>
        <dbReference type="Rhea" id="RHEA-COMP:10693"/>
        <dbReference type="Rhea" id="RHEA-COMP:10694"/>
        <dbReference type="ChEBI" id="CHEBI:30089"/>
        <dbReference type="ChEBI" id="CHEBI:30616"/>
        <dbReference type="ChEBI" id="CHEBI:33019"/>
        <dbReference type="ChEBI" id="CHEBI:74900"/>
        <dbReference type="ChEBI" id="CHEBI:82748"/>
        <dbReference type="ChEBI" id="CHEBI:456215"/>
    </reaction>
</comment>
<comment type="subcellular location">
    <subcellularLocation>
        <location evidence="1">Cytoplasm</location>
    </subcellularLocation>
</comment>
<comment type="similarity">
    <text evidence="1">Belongs to the TmcAL family.</text>
</comment>
<name>TMCAL_STRP8</name>
<reference key="1">
    <citation type="journal article" date="2002" name="Proc. Natl. Acad. Sci. U.S.A.">
        <title>Genome sequence and comparative microarray analysis of serotype M18 group A Streptococcus strains associated with acute rheumatic fever outbreaks.</title>
        <authorList>
            <person name="Smoot J.C."/>
            <person name="Barbian K.D."/>
            <person name="Van Gompel J.J."/>
            <person name="Smoot L.M."/>
            <person name="Chaussee M.S."/>
            <person name="Sylva G.L."/>
            <person name="Sturdevant D.E."/>
            <person name="Ricklefs S.M."/>
            <person name="Porcella S.F."/>
            <person name="Parkins L.D."/>
            <person name="Beres S.B."/>
            <person name="Campbell D.S."/>
            <person name="Smith T.M."/>
            <person name="Zhang Q."/>
            <person name="Kapur V."/>
            <person name="Daly J.A."/>
            <person name="Veasy L.G."/>
            <person name="Musser J.M."/>
        </authorList>
    </citation>
    <scope>NUCLEOTIDE SEQUENCE [LARGE SCALE GENOMIC DNA]</scope>
    <source>
        <strain>MGAS8232</strain>
    </source>
</reference>
<keyword id="KW-0067">ATP-binding</keyword>
<keyword id="KW-0963">Cytoplasm</keyword>
<keyword id="KW-0436">Ligase</keyword>
<keyword id="KW-0547">Nucleotide-binding</keyword>
<keyword id="KW-0694">RNA-binding</keyword>
<keyword id="KW-0819">tRNA processing</keyword>
<keyword id="KW-0820">tRNA-binding</keyword>
<gene>
    <name evidence="1" type="primary">tmcAL</name>
    <name type="ordered locus">spyM18_0309</name>
</gene>
<protein>
    <recommendedName>
        <fullName evidence="1">tRNA(Met) cytidine acetate ligase</fullName>
        <ecNumber evidence="1">6.3.4.-</ecNumber>
    </recommendedName>
</protein>
<sequence length="368" mass="41646">MTVTGIIAEFNPFHNGHKYLLETAEGLKIIAMSGNFMQRGEPALIDKWIRSEMALKNGADIVVELPFFVSVQSADYFAQGAIDILCQLGIQQLAFGTENVIDYQKLIKVYEKKSEQMTAYLSTLEDTLSYPQKTQKMWEIFAGVKFSGQTPNHILGLSYAKASAGKHIQLCPIKRQGAAYHSKDKNHLLASASAIRQHLNDWDFISHSVPNAGLLINNPHMSWDHYFSFLKYQILNHSDLTSIFQVNDELASRIKKAIKVSQNIDHLVDTVATKRYTKARVRRILTYILVNAKEPTLPKGIHILGFTSKGQAHLKKLKKSRPLITRIGAETWDEMTQKADSIYQLGHQDIPEQSFGRIPIIIKNERLN</sequence>